<evidence type="ECO:0000255" key="1">
    <source>
        <dbReference type="HAMAP-Rule" id="MF_00358"/>
    </source>
</evidence>
<evidence type="ECO:0000256" key="2">
    <source>
        <dbReference type="SAM" id="MobiDB-lite"/>
    </source>
</evidence>
<evidence type="ECO:0000305" key="3"/>
<name>RS21_PSESM</name>
<protein>
    <recommendedName>
        <fullName evidence="1">Small ribosomal subunit protein bS21</fullName>
    </recommendedName>
    <alternativeName>
        <fullName evidence="3">30S ribosomal protein S21</fullName>
    </alternativeName>
</protein>
<proteinExistence type="inferred from homology"/>
<keyword id="KW-1185">Reference proteome</keyword>
<keyword id="KW-0687">Ribonucleoprotein</keyword>
<keyword id="KW-0689">Ribosomal protein</keyword>
<feature type="chain" id="PRO_0000178362" description="Small ribosomal subunit protein bS21">
    <location>
        <begin position="1"/>
        <end position="71"/>
    </location>
</feature>
<feature type="region of interest" description="Disordered" evidence="2">
    <location>
        <begin position="50"/>
        <end position="71"/>
    </location>
</feature>
<feature type="compositionally biased region" description="Basic residues" evidence="2">
    <location>
        <begin position="50"/>
        <end position="59"/>
    </location>
</feature>
<feature type="compositionally biased region" description="Basic and acidic residues" evidence="2">
    <location>
        <begin position="60"/>
        <end position="71"/>
    </location>
</feature>
<gene>
    <name evidence="1" type="primary">rpsU</name>
    <name type="ordered locus">PSPTO_0539</name>
</gene>
<comment type="similarity">
    <text evidence="1">Belongs to the bacterial ribosomal protein bS21 family.</text>
</comment>
<accession>Q88A58</accession>
<reference key="1">
    <citation type="journal article" date="2003" name="Proc. Natl. Acad. Sci. U.S.A.">
        <title>The complete genome sequence of the Arabidopsis and tomato pathogen Pseudomonas syringae pv. tomato DC3000.</title>
        <authorList>
            <person name="Buell C.R."/>
            <person name="Joardar V."/>
            <person name="Lindeberg M."/>
            <person name="Selengut J."/>
            <person name="Paulsen I.T."/>
            <person name="Gwinn M.L."/>
            <person name="Dodson R.J."/>
            <person name="DeBoy R.T."/>
            <person name="Durkin A.S."/>
            <person name="Kolonay J.F."/>
            <person name="Madupu R."/>
            <person name="Daugherty S.C."/>
            <person name="Brinkac L.M."/>
            <person name="Beanan M.J."/>
            <person name="Haft D.H."/>
            <person name="Nelson W.C."/>
            <person name="Davidsen T.M."/>
            <person name="Zafar N."/>
            <person name="Zhou L."/>
            <person name="Liu J."/>
            <person name="Yuan Q."/>
            <person name="Khouri H.M."/>
            <person name="Fedorova N.B."/>
            <person name="Tran B."/>
            <person name="Russell D."/>
            <person name="Berry K.J."/>
            <person name="Utterback T.R."/>
            <person name="Van Aken S.E."/>
            <person name="Feldblyum T.V."/>
            <person name="D'Ascenzo M."/>
            <person name="Deng W.-L."/>
            <person name="Ramos A.R."/>
            <person name="Alfano J.R."/>
            <person name="Cartinhour S."/>
            <person name="Chatterjee A.K."/>
            <person name="Delaney T.P."/>
            <person name="Lazarowitz S.G."/>
            <person name="Martin G.B."/>
            <person name="Schneider D.J."/>
            <person name="Tang X."/>
            <person name="Bender C.L."/>
            <person name="White O."/>
            <person name="Fraser C.M."/>
            <person name="Collmer A."/>
        </authorList>
    </citation>
    <scope>NUCLEOTIDE SEQUENCE [LARGE SCALE GENOMIC DNA]</scope>
    <source>
        <strain>ATCC BAA-871 / DC3000</strain>
    </source>
</reference>
<dbReference type="EMBL" id="AE016853">
    <property type="protein sequence ID" value="AAO54081.1"/>
    <property type="molecule type" value="Genomic_DNA"/>
</dbReference>
<dbReference type="RefSeq" id="NP_790386.1">
    <property type="nucleotide sequence ID" value="NC_004578.1"/>
</dbReference>
<dbReference type="RefSeq" id="WP_002551877.1">
    <property type="nucleotide sequence ID" value="NC_004578.1"/>
</dbReference>
<dbReference type="SMR" id="Q88A58"/>
<dbReference type="STRING" id="223283.PSPTO_0539"/>
<dbReference type="GeneID" id="98285513"/>
<dbReference type="KEGG" id="pst:PSPTO_0539"/>
<dbReference type="PATRIC" id="fig|223283.9.peg.549"/>
<dbReference type="eggNOG" id="COG0828">
    <property type="taxonomic scope" value="Bacteria"/>
</dbReference>
<dbReference type="HOGENOM" id="CLU_159258_1_0_6"/>
<dbReference type="OrthoDB" id="9799244at2"/>
<dbReference type="PhylomeDB" id="Q88A58"/>
<dbReference type="PRO" id="PR:Q88A58"/>
<dbReference type="Proteomes" id="UP000002515">
    <property type="component" value="Chromosome"/>
</dbReference>
<dbReference type="GO" id="GO:1990904">
    <property type="term" value="C:ribonucleoprotein complex"/>
    <property type="evidence" value="ECO:0007669"/>
    <property type="project" value="UniProtKB-KW"/>
</dbReference>
<dbReference type="GO" id="GO:0005840">
    <property type="term" value="C:ribosome"/>
    <property type="evidence" value="ECO:0007669"/>
    <property type="project" value="UniProtKB-KW"/>
</dbReference>
<dbReference type="GO" id="GO:0003735">
    <property type="term" value="F:structural constituent of ribosome"/>
    <property type="evidence" value="ECO:0007669"/>
    <property type="project" value="InterPro"/>
</dbReference>
<dbReference type="GO" id="GO:0006412">
    <property type="term" value="P:translation"/>
    <property type="evidence" value="ECO:0007669"/>
    <property type="project" value="UniProtKB-UniRule"/>
</dbReference>
<dbReference type="Gene3D" id="1.20.5.1150">
    <property type="entry name" value="Ribosomal protein S8"/>
    <property type="match status" value="1"/>
</dbReference>
<dbReference type="HAMAP" id="MF_00358">
    <property type="entry name" value="Ribosomal_bS21"/>
    <property type="match status" value="1"/>
</dbReference>
<dbReference type="InterPro" id="IPR001911">
    <property type="entry name" value="Ribosomal_bS21"/>
</dbReference>
<dbReference type="InterPro" id="IPR018278">
    <property type="entry name" value="Ribosomal_bS21_CS"/>
</dbReference>
<dbReference type="InterPro" id="IPR038380">
    <property type="entry name" value="Ribosomal_bS21_sf"/>
</dbReference>
<dbReference type="NCBIfam" id="TIGR00030">
    <property type="entry name" value="S21p"/>
    <property type="match status" value="1"/>
</dbReference>
<dbReference type="PANTHER" id="PTHR21109">
    <property type="entry name" value="MITOCHONDRIAL 28S RIBOSOMAL PROTEIN S21"/>
    <property type="match status" value="1"/>
</dbReference>
<dbReference type="PANTHER" id="PTHR21109:SF22">
    <property type="entry name" value="SMALL RIBOSOMAL SUBUNIT PROTEIN BS21"/>
    <property type="match status" value="1"/>
</dbReference>
<dbReference type="Pfam" id="PF01165">
    <property type="entry name" value="Ribosomal_S21"/>
    <property type="match status" value="1"/>
</dbReference>
<dbReference type="PRINTS" id="PR00976">
    <property type="entry name" value="RIBOSOMALS21"/>
</dbReference>
<dbReference type="PROSITE" id="PS01181">
    <property type="entry name" value="RIBOSOMAL_S21"/>
    <property type="match status" value="1"/>
</dbReference>
<sequence length="71" mass="8386">MPAVKVKENEPFDVALRRFKRSCEKAGVLAEVRSREFYEKPTSERKRKAAAAVKRHAKKVQREQRRAVRLY</sequence>
<organism>
    <name type="scientific">Pseudomonas syringae pv. tomato (strain ATCC BAA-871 / DC3000)</name>
    <dbReference type="NCBI Taxonomy" id="223283"/>
    <lineage>
        <taxon>Bacteria</taxon>
        <taxon>Pseudomonadati</taxon>
        <taxon>Pseudomonadota</taxon>
        <taxon>Gammaproteobacteria</taxon>
        <taxon>Pseudomonadales</taxon>
        <taxon>Pseudomonadaceae</taxon>
        <taxon>Pseudomonas</taxon>
    </lineage>
</organism>